<keyword id="KW-0007">Acetylation</keyword>
<keyword id="KW-0378">Hydrolase</keyword>
<keyword id="KW-0511">Multifunctional enzyme</keyword>
<keyword id="KW-0658">Purine biosynthesis</keyword>
<keyword id="KW-0808">Transferase</keyword>
<evidence type="ECO:0000255" key="1">
    <source>
        <dbReference type="HAMAP-Rule" id="MF_00139"/>
    </source>
</evidence>
<evidence type="ECO:0000255" key="2">
    <source>
        <dbReference type="PROSITE-ProRule" id="PRU01202"/>
    </source>
</evidence>
<gene>
    <name evidence="1" type="primary">purH</name>
    <name type="ordered locus">ECDH10B_4195</name>
</gene>
<reference key="1">
    <citation type="journal article" date="2008" name="J. Bacteriol.">
        <title>The complete genome sequence of Escherichia coli DH10B: insights into the biology of a laboratory workhorse.</title>
        <authorList>
            <person name="Durfee T."/>
            <person name="Nelson R."/>
            <person name="Baldwin S."/>
            <person name="Plunkett G. III"/>
            <person name="Burland V."/>
            <person name="Mau B."/>
            <person name="Petrosino J.F."/>
            <person name="Qin X."/>
            <person name="Muzny D.M."/>
            <person name="Ayele M."/>
            <person name="Gibbs R.A."/>
            <person name="Csorgo B."/>
            <person name="Posfai G."/>
            <person name="Weinstock G.M."/>
            <person name="Blattner F.R."/>
        </authorList>
    </citation>
    <scope>NUCLEOTIDE SEQUENCE [LARGE SCALE GENOMIC DNA]</scope>
    <source>
        <strain>K12 / DH10B</strain>
    </source>
</reference>
<feature type="chain" id="PRO_1000096061" description="Bifunctional purine biosynthesis protein PurH">
    <location>
        <begin position="1"/>
        <end position="529"/>
    </location>
</feature>
<feature type="domain" description="MGS-like" evidence="2">
    <location>
        <begin position="1"/>
        <end position="148"/>
    </location>
</feature>
<feature type="modified residue" description="N6-acetyllysine" evidence="1">
    <location>
        <position position="287"/>
    </location>
</feature>
<name>PUR9_ECODH</name>
<sequence>MQQRRPVRRALLSVSDKAGIVEFAQALSARGVELLSTGGTARLLAEKGLPVTEVSDYTGFPEMMDGRVKTLHPKVHGGILGRRGQDDAIMEEHQIQPIDMVVVNLYPFAQTVAREGCSLEDAVENIDIGGPTMVRSAAKNHKDVAIVVKSSDYDAIIKEMDDNEGSLTLATRFDLAIKAFEHTAAYDSMIANYFGSMVPAYHGESKEAAGRFPRTLNLNFIKKLDMRYGENSHQQAAFYIEENVKEASVATATQVQGKALSYNNIADTDAALECVKEFAEPACVIVKHANPCGVAIGNSILDAYDRAYKTDPTSAFGGIIAFNRELDAETAQAIISRQFVEVIIAPSASEEALKITAAKQNVRVLTCGQWGERVPGLDFKRVNGGLLVQDRDLGMVGAEELRVVTKRQPSEQELRDALFCWKVAKFVKSNAIVYAKNNMTIGIGAGQMSRVYSAKIAGIKAADEGLEVKGSSMASDAFFPFRDGIDAAAAAGVTCVIQPGGSIRDDEVIAAADEHGIAMLFTDMRHFRH</sequence>
<accession>B1XC09</accession>
<protein>
    <recommendedName>
        <fullName evidence="1">Bifunctional purine biosynthesis protein PurH</fullName>
    </recommendedName>
    <domain>
        <recommendedName>
            <fullName evidence="1">Phosphoribosylaminoimidazolecarboxamide formyltransferase</fullName>
            <ecNumber evidence="1">2.1.2.3</ecNumber>
        </recommendedName>
        <alternativeName>
            <fullName evidence="1">AICAR transformylase</fullName>
        </alternativeName>
    </domain>
    <domain>
        <recommendedName>
            <fullName evidence="1">IMP cyclohydrolase</fullName>
            <ecNumber evidence="1">3.5.4.10</ecNumber>
        </recommendedName>
        <alternativeName>
            <fullName evidence="1">ATIC</fullName>
        </alternativeName>
        <alternativeName>
            <fullName evidence="1">IMP synthase</fullName>
        </alternativeName>
        <alternativeName>
            <fullName evidence="1">Inosinicase</fullName>
        </alternativeName>
    </domain>
</protein>
<comment type="catalytic activity">
    <reaction evidence="1">
        <text>(6R)-10-formyltetrahydrofolate + 5-amino-1-(5-phospho-beta-D-ribosyl)imidazole-4-carboxamide = 5-formamido-1-(5-phospho-D-ribosyl)imidazole-4-carboxamide + (6S)-5,6,7,8-tetrahydrofolate</text>
        <dbReference type="Rhea" id="RHEA:22192"/>
        <dbReference type="ChEBI" id="CHEBI:57453"/>
        <dbReference type="ChEBI" id="CHEBI:58467"/>
        <dbReference type="ChEBI" id="CHEBI:58475"/>
        <dbReference type="ChEBI" id="CHEBI:195366"/>
        <dbReference type="EC" id="2.1.2.3"/>
    </reaction>
</comment>
<comment type="catalytic activity">
    <reaction evidence="1">
        <text>IMP + H2O = 5-formamido-1-(5-phospho-D-ribosyl)imidazole-4-carboxamide</text>
        <dbReference type="Rhea" id="RHEA:18445"/>
        <dbReference type="ChEBI" id="CHEBI:15377"/>
        <dbReference type="ChEBI" id="CHEBI:58053"/>
        <dbReference type="ChEBI" id="CHEBI:58467"/>
        <dbReference type="EC" id="3.5.4.10"/>
    </reaction>
</comment>
<comment type="pathway">
    <text evidence="1">Purine metabolism; IMP biosynthesis via de novo pathway; 5-formamido-1-(5-phospho-D-ribosyl)imidazole-4-carboxamide from 5-amino-1-(5-phospho-D-ribosyl)imidazole-4-carboxamide (10-formyl THF route): step 1/1.</text>
</comment>
<comment type="pathway">
    <text evidence="1">Purine metabolism; IMP biosynthesis via de novo pathway; IMP from 5-formamido-1-(5-phospho-D-ribosyl)imidazole-4-carboxamide: step 1/1.</text>
</comment>
<comment type="domain">
    <text evidence="1">The IMP cyclohydrolase activity resides in the N-terminal region.</text>
</comment>
<comment type="similarity">
    <text evidence="1">Belongs to the PurH family.</text>
</comment>
<proteinExistence type="inferred from homology"/>
<organism>
    <name type="scientific">Escherichia coli (strain K12 / DH10B)</name>
    <dbReference type="NCBI Taxonomy" id="316385"/>
    <lineage>
        <taxon>Bacteria</taxon>
        <taxon>Pseudomonadati</taxon>
        <taxon>Pseudomonadota</taxon>
        <taxon>Gammaproteobacteria</taxon>
        <taxon>Enterobacterales</taxon>
        <taxon>Enterobacteriaceae</taxon>
        <taxon>Escherichia</taxon>
    </lineage>
</organism>
<dbReference type="EC" id="2.1.2.3" evidence="1"/>
<dbReference type="EC" id="3.5.4.10" evidence="1"/>
<dbReference type="EMBL" id="CP000948">
    <property type="protein sequence ID" value="ACB05009.1"/>
    <property type="molecule type" value="Genomic_DNA"/>
</dbReference>
<dbReference type="RefSeq" id="WP_001187559.1">
    <property type="nucleotide sequence ID" value="NC_010473.1"/>
</dbReference>
<dbReference type="SMR" id="B1XC09"/>
<dbReference type="KEGG" id="ecd:ECDH10B_4195"/>
<dbReference type="HOGENOM" id="CLU_016316_5_2_6"/>
<dbReference type="UniPathway" id="UPA00074">
    <property type="reaction ID" value="UER00133"/>
</dbReference>
<dbReference type="UniPathway" id="UPA00074">
    <property type="reaction ID" value="UER00135"/>
</dbReference>
<dbReference type="GO" id="GO:0005829">
    <property type="term" value="C:cytosol"/>
    <property type="evidence" value="ECO:0007669"/>
    <property type="project" value="TreeGrafter"/>
</dbReference>
<dbReference type="GO" id="GO:0003937">
    <property type="term" value="F:IMP cyclohydrolase activity"/>
    <property type="evidence" value="ECO:0007669"/>
    <property type="project" value="UniProtKB-UniRule"/>
</dbReference>
<dbReference type="GO" id="GO:0004643">
    <property type="term" value="F:phosphoribosylaminoimidazolecarboxamide formyltransferase activity"/>
    <property type="evidence" value="ECO:0007669"/>
    <property type="project" value="UniProtKB-UniRule"/>
</dbReference>
<dbReference type="GO" id="GO:0006189">
    <property type="term" value="P:'de novo' IMP biosynthetic process"/>
    <property type="evidence" value="ECO:0007669"/>
    <property type="project" value="UniProtKB-UniRule"/>
</dbReference>
<dbReference type="CDD" id="cd01421">
    <property type="entry name" value="IMPCH"/>
    <property type="match status" value="1"/>
</dbReference>
<dbReference type="FunFam" id="3.40.140.20:FF:000001">
    <property type="entry name" value="Bifunctional purine biosynthesis protein PurH"/>
    <property type="match status" value="1"/>
</dbReference>
<dbReference type="FunFam" id="3.40.140.20:FF:000002">
    <property type="entry name" value="Bifunctional purine biosynthesis protein PurH"/>
    <property type="match status" value="1"/>
</dbReference>
<dbReference type="FunFam" id="3.40.50.1380:FF:000001">
    <property type="entry name" value="Bifunctional purine biosynthesis protein PurH"/>
    <property type="match status" value="1"/>
</dbReference>
<dbReference type="Gene3D" id="3.40.140.20">
    <property type="match status" value="2"/>
</dbReference>
<dbReference type="Gene3D" id="3.40.50.1380">
    <property type="entry name" value="Methylglyoxal synthase-like domain"/>
    <property type="match status" value="1"/>
</dbReference>
<dbReference type="HAMAP" id="MF_00139">
    <property type="entry name" value="PurH"/>
    <property type="match status" value="1"/>
</dbReference>
<dbReference type="InterPro" id="IPR024051">
    <property type="entry name" value="AICAR_Tfase_dup_dom_sf"/>
</dbReference>
<dbReference type="InterPro" id="IPR016193">
    <property type="entry name" value="Cytidine_deaminase-like"/>
</dbReference>
<dbReference type="InterPro" id="IPR011607">
    <property type="entry name" value="MGS-like_dom"/>
</dbReference>
<dbReference type="InterPro" id="IPR036914">
    <property type="entry name" value="MGS-like_dom_sf"/>
</dbReference>
<dbReference type="InterPro" id="IPR002695">
    <property type="entry name" value="PurH-like"/>
</dbReference>
<dbReference type="NCBIfam" id="NF002049">
    <property type="entry name" value="PRK00881.1"/>
    <property type="match status" value="1"/>
</dbReference>
<dbReference type="NCBIfam" id="TIGR00355">
    <property type="entry name" value="purH"/>
    <property type="match status" value="1"/>
</dbReference>
<dbReference type="PANTHER" id="PTHR11692:SF0">
    <property type="entry name" value="BIFUNCTIONAL PURINE BIOSYNTHESIS PROTEIN ATIC"/>
    <property type="match status" value="1"/>
</dbReference>
<dbReference type="PANTHER" id="PTHR11692">
    <property type="entry name" value="BIFUNCTIONAL PURINE BIOSYNTHESIS PROTEIN PURH"/>
    <property type="match status" value="1"/>
</dbReference>
<dbReference type="Pfam" id="PF01808">
    <property type="entry name" value="AICARFT_IMPCHas"/>
    <property type="match status" value="1"/>
</dbReference>
<dbReference type="Pfam" id="PF02142">
    <property type="entry name" value="MGS"/>
    <property type="match status" value="1"/>
</dbReference>
<dbReference type="PIRSF" id="PIRSF000414">
    <property type="entry name" value="AICARFT_IMPCHas"/>
    <property type="match status" value="1"/>
</dbReference>
<dbReference type="SMART" id="SM00798">
    <property type="entry name" value="AICARFT_IMPCHas"/>
    <property type="match status" value="1"/>
</dbReference>
<dbReference type="SMART" id="SM00851">
    <property type="entry name" value="MGS"/>
    <property type="match status" value="1"/>
</dbReference>
<dbReference type="SUPFAM" id="SSF53927">
    <property type="entry name" value="Cytidine deaminase-like"/>
    <property type="match status" value="1"/>
</dbReference>
<dbReference type="SUPFAM" id="SSF52335">
    <property type="entry name" value="Methylglyoxal synthase-like"/>
    <property type="match status" value="1"/>
</dbReference>
<dbReference type="PROSITE" id="PS51855">
    <property type="entry name" value="MGS"/>
    <property type="match status" value="1"/>
</dbReference>